<comment type="catalytic activity">
    <reaction evidence="1">
        <text>tRNA(Arg) + L-arginine + ATP = L-arginyl-tRNA(Arg) + AMP + diphosphate</text>
        <dbReference type="Rhea" id="RHEA:20301"/>
        <dbReference type="Rhea" id="RHEA-COMP:9658"/>
        <dbReference type="Rhea" id="RHEA-COMP:9673"/>
        <dbReference type="ChEBI" id="CHEBI:30616"/>
        <dbReference type="ChEBI" id="CHEBI:32682"/>
        <dbReference type="ChEBI" id="CHEBI:33019"/>
        <dbReference type="ChEBI" id="CHEBI:78442"/>
        <dbReference type="ChEBI" id="CHEBI:78513"/>
        <dbReference type="ChEBI" id="CHEBI:456215"/>
        <dbReference type="EC" id="6.1.1.19"/>
    </reaction>
</comment>
<comment type="subunit">
    <text evidence="1">Monomer.</text>
</comment>
<comment type="subcellular location">
    <subcellularLocation>
        <location evidence="1">Cytoplasm</location>
    </subcellularLocation>
</comment>
<comment type="similarity">
    <text evidence="1">Belongs to the class-I aminoacyl-tRNA synthetase family.</text>
</comment>
<keyword id="KW-0030">Aminoacyl-tRNA synthetase</keyword>
<keyword id="KW-0067">ATP-binding</keyword>
<keyword id="KW-0963">Cytoplasm</keyword>
<keyword id="KW-0436">Ligase</keyword>
<keyword id="KW-0547">Nucleotide-binding</keyword>
<keyword id="KW-0648">Protein biosynthesis</keyword>
<feature type="chain" id="PRO_1000018068" description="Arginine--tRNA ligase">
    <location>
        <begin position="1"/>
        <end position="550"/>
    </location>
</feature>
<feature type="short sequence motif" description="'HIGH' region">
    <location>
        <begin position="130"/>
        <end position="140"/>
    </location>
</feature>
<accession>A1KI80</accession>
<proteinExistence type="inferred from homology"/>
<organism>
    <name type="scientific">Mycobacterium bovis (strain BCG / Pasteur 1173P2)</name>
    <dbReference type="NCBI Taxonomy" id="410289"/>
    <lineage>
        <taxon>Bacteria</taxon>
        <taxon>Bacillati</taxon>
        <taxon>Actinomycetota</taxon>
        <taxon>Actinomycetes</taxon>
        <taxon>Mycobacteriales</taxon>
        <taxon>Mycobacteriaceae</taxon>
        <taxon>Mycobacterium</taxon>
        <taxon>Mycobacterium tuberculosis complex</taxon>
    </lineage>
</organism>
<dbReference type="EC" id="6.1.1.19" evidence="1"/>
<dbReference type="EMBL" id="AM408590">
    <property type="protein sequence ID" value="CAL71339.1"/>
    <property type="molecule type" value="Genomic_DNA"/>
</dbReference>
<dbReference type="RefSeq" id="WP_003406630.1">
    <property type="nucleotide sequence ID" value="NC_008769.1"/>
</dbReference>
<dbReference type="SMR" id="A1KI80"/>
<dbReference type="KEGG" id="mbb:BCG_1352"/>
<dbReference type="HOGENOM" id="CLU_006406_0_1_11"/>
<dbReference type="Proteomes" id="UP000001472">
    <property type="component" value="Chromosome"/>
</dbReference>
<dbReference type="GO" id="GO:0005737">
    <property type="term" value="C:cytoplasm"/>
    <property type="evidence" value="ECO:0007669"/>
    <property type="project" value="UniProtKB-SubCell"/>
</dbReference>
<dbReference type="GO" id="GO:0004814">
    <property type="term" value="F:arginine-tRNA ligase activity"/>
    <property type="evidence" value="ECO:0007669"/>
    <property type="project" value="UniProtKB-UniRule"/>
</dbReference>
<dbReference type="GO" id="GO:0005524">
    <property type="term" value="F:ATP binding"/>
    <property type="evidence" value="ECO:0007669"/>
    <property type="project" value="UniProtKB-UniRule"/>
</dbReference>
<dbReference type="GO" id="GO:0006420">
    <property type="term" value="P:arginyl-tRNA aminoacylation"/>
    <property type="evidence" value="ECO:0007669"/>
    <property type="project" value="UniProtKB-UniRule"/>
</dbReference>
<dbReference type="CDD" id="cd07956">
    <property type="entry name" value="Anticodon_Ia_Arg"/>
    <property type="match status" value="1"/>
</dbReference>
<dbReference type="CDD" id="cd00671">
    <property type="entry name" value="ArgRS_core"/>
    <property type="match status" value="1"/>
</dbReference>
<dbReference type="FunFam" id="1.10.730.10:FF:000008">
    <property type="entry name" value="Arginine--tRNA ligase"/>
    <property type="match status" value="1"/>
</dbReference>
<dbReference type="FunFam" id="3.30.1360.70:FF:000003">
    <property type="entry name" value="Arginine--tRNA ligase"/>
    <property type="match status" value="1"/>
</dbReference>
<dbReference type="FunFam" id="3.40.50.620:FF:000062">
    <property type="entry name" value="Arginine--tRNA ligase"/>
    <property type="match status" value="1"/>
</dbReference>
<dbReference type="Gene3D" id="3.30.1360.70">
    <property type="entry name" value="Arginyl tRNA synthetase N-terminal domain"/>
    <property type="match status" value="1"/>
</dbReference>
<dbReference type="Gene3D" id="3.40.50.620">
    <property type="entry name" value="HUPs"/>
    <property type="match status" value="1"/>
</dbReference>
<dbReference type="Gene3D" id="1.10.730.10">
    <property type="entry name" value="Isoleucyl-tRNA Synthetase, Domain 1"/>
    <property type="match status" value="1"/>
</dbReference>
<dbReference type="HAMAP" id="MF_00123">
    <property type="entry name" value="Arg_tRNA_synth"/>
    <property type="match status" value="1"/>
</dbReference>
<dbReference type="InterPro" id="IPR001412">
    <property type="entry name" value="aa-tRNA-synth_I_CS"/>
</dbReference>
<dbReference type="InterPro" id="IPR001278">
    <property type="entry name" value="Arg-tRNA-ligase"/>
</dbReference>
<dbReference type="InterPro" id="IPR005148">
    <property type="entry name" value="Arg-tRNA-synth_N"/>
</dbReference>
<dbReference type="InterPro" id="IPR036695">
    <property type="entry name" value="Arg-tRNA-synth_N_sf"/>
</dbReference>
<dbReference type="InterPro" id="IPR035684">
    <property type="entry name" value="ArgRS_core"/>
</dbReference>
<dbReference type="InterPro" id="IPR008909">
    <property type="entry name" value="DALR_anticod-bd"/>
</dbReference>
<dbReference type="InterPro" id="IPR014729">
    <property type="entry name" value="Rossmann-like_a/b/a_fold"/>
</dbReference>
<dbReference type="InterPro" id="IPR009080">
    <property type="entry name" value="tRNAsynth_Ia_anticodon-bd"/>
</dbReference>
<dbReference type="NCBIfam" id="TIGR00456">
    <property type="entry name" value="argS"/>
    <property type="match status" value="1"/>
</dbReference>
<dbReference type="PANTHER" id="PTHR11956:SF5">
    <property type="entry name" value="ARGININE--TRNA LIGASE, CYTOPLASMIC"/>
    <property type="match status" value="1"/>
</dbReference>
<dbReference type="PANTHER" id="PTHR11956">
    <property type="entry name" value="ARGINYL-TRNA SYNTHETASE"/>
    <property type="match status" value="1"/>
</dbReference>
<dbReference type="Pfam" id="PF03485">
    <property type="entry name" value="Arg_tRNA_synt_N"/>
    <property type="match status" value="1"/>
</dbReference>
<dbReference type="Pfam" id="PF05746">
    <property type="entry name" value="DALR_1"/>
    <property type="match status" value="1"/>
</dbReference>
<dbReference type="Pfam" id="PF00750">
    <property type="entry name" value="tRNA-synt_1d"/>
    <property type="match status" value="1"/>
</dbReference>
<dbReference type="PRINTS" id="PR01038">
    <property type="entry name" value="TRNASYNTHARG"/>
</dbReference>
<dbReference type="SMART" id="SM01016">
    <property type="entry name" value="Arg_tRNA_synt_N"/>
    <property type="match status" value="1"/>
</dbReference>
<dbReference type="SMART" id="SM00836">
    <property type="entry name" value="DALR_1"/>
    <property type="match status" value="1"/>
</dbReference>
<dbReference type="SUPFAM" id="SSF47323">
    <property type="entry name" value="Anticodon-binding domain of a subclass of class I aminoacyl-tRNA synthetases"/>
    <property type="match status" value="1"/>
</dbReference>
<dbReference type="SUPFAM" id="SSF55190">
    <property type="entry name" value="Arginyl-tRNA synthetase (ArgRS), N-terminal 'additional' domain"/>
    <property type="match status" value="1"/>
</dbReference>
<dbReference type="SUPFAM" id="SSF52374">
    <property type="entry name" value="Nucleotidylyl transferase"/>
    <property type="match status" value="1"/>
</dbReference>
<dbReference type="PROSITE" id="PS00178">
    <property type="entry name" value="AA_TRNA_LIGASE_I"/>
    <property type="match status" value="1"/>
</dbReference>
<evidence type="ECO:0000255" key="1">
    <source>
        <dbReference type="HAMAP-Rule" id="MF_00123"/>
    </source>
</evidence>
<name>SYR_MYCBP</name>
<sequence length="550" mass="59709">MTPADLAELLKATAAAVLAERGLDASALPQMVTVERPRIPEHGDYASNLAMQLAKKVGTNPRELAGWLAEALTKVDGIASAEVAGPGFINMRLETAAQAKVVTSVIDAGHSYGHSLLLAGRKVNLEFVSANPTGPIHIGGTRWAAVGDALGRLLTTQGADVVREYYFNDHGAQIDRFANSLIAAAKGEPTPQDGYAGSYITNIAEQVLQKAPDALSLPDAELRETFRAIGVDLMFDHIKQSLHEFGTDFDVYTHEDSMHTGGRVENAIARLRETGNIYEKDGATWLRTSAFGDDKDRVVIKSDGKPAYIAGDLAYYLDKRQRGFDLCIYMLGADHHGYIARLKAAAAAFGDDPATVEVLIGQMVNLVRDGQPVRMSKRAGTVLTLDDLVEAIGVDAARYSLIRSSVDTAIDIDLALWSSASNENPVYYVQYAHARLSALARNAAELALIPDTNHLELLNHDKEGTLLRTLGEFPRVLETAASLREPHRVCRYLEDLAGDYHRFYDSCRVLPQGDEQPTDLHTARLALCQATRQVIANGLAIIGVTAPERM</sequence>
<reference key="1">
    <citation type="journal article" date="2007" name="Proc. Natl. Acad. Sci. U.S.A.">
        <title>Genome plasticity of BCG and impact on vaccine efficacy.</title>
        <authorList>
            <person name="Brosch R."/>
            <person name="Gordon S.V."/>
            <person name="Garnier T."/>
            <person name="Eiglmeier K."/>
            <person name="Frigui W."/>
            <person name="Valenti P."/>
            <person name="Dos Santos S."/>
            <person name="Duthoy S."/>
            <person name="Lacroix C."/>
            <person name="Garcia-Pelayo C."/>
            <person name="Inwald J.K."/>
            <person name="Golby P."/>
            <person name="Garcia J.N."/>
            <person name="Hewinson R.G."/>
            <person name="Behr M.A."/>
            <person name="Quail M.A."/>
            <person name="Churcher C."/>
            <person name="Barrell B.G."/>
            <person name="Parkhill J."/>
            <person name="Cole S.T."/>
        </authorList>
    </citation>
    <scope>NUCLEOTIDE SEQUENCE [LARGE SCALE GENOMIC DNA]</scope>
    <source>
        <strain>BCG / Pasteur 1173P2</strain>
    </source>
</reference>
<gene>
    <name evidence="1" type="primary">argS</name>
    <name type="ordered locus">BCG_1352</name>
</gene>
<protein>
    <recommendedName>
        <fullName evidence="1">Arginine--tRNA ligase</fullName>
        <ecNumber evidence="1">6.1.1.19</ecNumber>
    </recommendedName>
    <alternativeName>
        <fullName evidence="1">Arginyl-tRNA synthetase</fullName>
        <shortName evidence="1">ArgRS</shortName>
    </alternativeName>
</protein>